<comment type="function">
    <text evidence="1">Required for maturation of 30S ribosomal subunits.</text>
</comment>
<comment type="subcellular location">
    <subcellularLocation>
        <location evidence="1">Cytoplasm</location>
    </subcellularLocation>
</comment>
<comment type="similarity">
    <text evidence="1">Belongs to the RimP family.</text>
</comment>
<comment type="sequence caution" evidence="2">
    <conflict type="erroneous initiation">
        <sequence resource="EMBL-CDS" id="CAL62566"/>
    </conflict>
</comment>
<sequence>MQLSALIEKTVVGMGYELVNFEQAARGLVRVYIDFTPEDADKGSITVEDCEKVTHQLLHVLTVENANYERLEVSSPGLDRPLKKLSDYVRFAGAEALVKLRLPMPNAANRKSFQGILQEPVGETLALEFEGNEGPAKLEFTLADVDKAHLVPQVNFRSRKA</sequence>
<keyword id="KW-0963">Cytoplasm</keyword>
<keyword id="KW-1185">Reference proteome</keyword>
<keyword id="KW-0690">Ribosome biogenesis</keyword>
<protein>
    <recommendedName>
        <fullName evidence="1">Ribosome maturation factor RimP</fullName>
    </recommendedName>
</protein>
<proteinExistence type="inferred from homology"/>
<dbReference type="EMBL" id="CU207211">
    <property type="protein sequence ID" value="CAL62566.1"/>
    <property type="status" value="ALT_INIT"/>
    <property type="molecule type" value="Genomic_DNA"/>
</dbReference>
<dbReference type="SMR" id="A4G7S9"/>
<dbReference type="STRING" id="204773.HEAR2435"/>
<dbReference type="KEGG" id="har:HEAR2435"/>
<dbReference type="eggNOG" id="COG0779">
    <property type="taxonomic scope" value="Bacteria"/>
</dbReference>
<dbReference type="HOGENOM" id="CLU_070525_1_0_4"/>
<dbReference type="OrthoDB" id="9805006at2"/>
<dbReference type="Proteomes" id="UP000006697">
    <property type="component" value="Chromosome"/>
</dbReference>
<dbReference type="GO" id="GO:0005829">
    <property type="term" value="C:cytosol"/>
    <property type="evidence" value="ECO:0007669"/>
    <property type="project" value="TreeGrafter"/>
</dbReference>
<dbReference type="GO" id="GO:0000028">
    <property type="term" value="P:ribosomal small subunit assembly"/>
    <property type="evidence" value="ECO:0007669"/>
    <property type="project" value="TreeGrafter"/>
</dbReference>
<dbReference type="GO" id="GO:0006412">
    <property type="term" value="P:translation"/>
    <property type="evidence" value="ECO:0007669"/>
    <property type="project" value="TreeGrafter"/>
</dbReference>
<dbReference type="CDD" id="cd01734">
    <property type="entry name" value="YlxS_C"/>
    <property type="match status" value="1"/>
</dbReference>
<dbReference type="Gene3D" id="3.30.300.70">
    <property type="entry name" value="RimP-like superfamily, N-terminal"/>
    <property type="match status" value="1"/>
</dbReference>
<dbReference type="HAMAP" id="MF_01077">
    <property type="entry name" value="RimP"/>
    <property type="match status" value="1"/>
</dbReference>
<dbReference type="InterPro" id="IPR003728">
    <property type="entry name" value="Ribosome_maturation_RimP"/>
</dbReference>
<dbReference type="InterPro" id="IPR028998">
    <property type="entry name" value="RimP_C"/>
</dbReference>
<dbReference type="InterPro" id="IPR036847">
    <property type="entry name" value="RimP_C_sf"/>
</dbReference>
<dbReference type="InterPro" id="IPR028989">
    <property type="entry name" value="RimP_N"/>
</dbReference>
<dbReference type="InterPro" id="IPR035956">
    <property type="entry name" value="RimP_N_sf"/>
</dbReference>
<dbReference type="NCBIfam" id="NF000929">
    <property type="entry name" value="PRK00092.2-1"/>
    <property type="match status" value="1"/>
</dbReference>
<dbReference type="PANTHER" id="PTHR33867">
    <property type="entry name" value="RIBOSOME MATURATION FACTOR RIMP"/>
    <property type="match status" value="1"/>
</dbReference>
<dbReference type="PANTHER" id="PTHR33867:SF1">
    <property type="entry name" value="RIBOSOME MATURATION FACTOR RIMP"/>
    <property type="match status" value="1"/>
</dbReference>
<dbReference type="Pfam" id="PF17384">
    <property type="entry name" value="DUF150_C"/>
    <property type="match status" value="1"/>
</dbReference>
<dbReference type="Pfam" id="PF02576">
    <property type="entry name" value="RimP_N"/>
    <property type="match status" value="1"/>
</dbReference>
<dbReference type="SUPFAM" id="SSF74942">
    <property type="entry name" value="YhbC-like, C-terminal domain"/>
    <property type="match status" value="1"/>
</dbReference>
<dbReference type="SUPFAM" id="SSF75420">
    <property type="entry name" value="YhbC-like, N-terminal domain"/>
    <property type="match status" value="1"/>
</dbReference>
<gene>
    <name evidence="1" type="primary">rimP</name>
    <name type="ordered locus">HEAR2435</name>
</gene>
<organism>
    <name type="scientific">Herminiimonas arsenicoxydans</name>
    <dbReference type="NCBI Taxonomy" id="204773"/>
    <lineage>
        <taxon>Bacteria</taxon>
        <taxon>Pseudomonadati</taxon>
        <taxon>Pseudomonadota</taxon>
        <taxon>Betaproteobacteria</taxon>
        <taxon>Burkholderiales</taxon>
        <taxon>Oxalobacteraceae</taxon>
        <taxon>Herminiimonas</taxon>
    </lineage>
</organism>
<reference key="1">
    <citation type="journal article" date="2007" name="PLoS Genet.">
        <title>A tale of two oxidation states: bacterial colonization of arsenic-rich environments.</title>
        <authorList>
            <person name="Muller D."/>
            <person name="Medigue C."/>
            <person name="Koechler S."/>
            <person name="Barbe V."/>
            <person name="Barakat M."/>
            <person name="Talla E."/>
            <person name="Bonnefoy V."/>
            <person name="Krin E."/>
            <person name="Arsene-Ploetze F."/>
            <person name="Carapito C."/>
            <person name="Chandler M."/>
            <person name="Cournoyer B."/>
            <person name="Cruveiller S."/>
            <person name="Dossat C."/>
            <person name="Duval S."/>
            <person name="Heymann M."/>
            <person name="Leize E."/>
            <person name="Lieutaud A."/>
            <person name="Lievremont D."/>
            <person name="Makita Y."/>
            <person name="Mangenot S."/>
            <person name="Nitschke W."/>
            <person name="Ortet P."/>
            <person name="Perdrial N."/>
            <person name="Schoepp B."/>
            <person name="Siguier P."/>
            <person name="Simeonova D.D."/>
            <person name="Rouy Z."/>
            <person name="Segurens B."/>
            <person name="Turlin E."/>
            <person name="Vallenet D."/>
            <person name="van Dorsselaer A."/>
            <person name="Weiss S."/>
            <person name="Weissenbach J."/>
            <person name="Lett M.-C."/>
            <person name="Danchin A."/>
            <person name="Bertin P.N."/>
        </authorList>
    </citation>
    <scope>NUCLEOTIDE SEQUENCE [LARGE SCALE GENOMIC DNA]</scope>
    <source>
        <strain>ULPAs1</strain>
    </source>
</reference>
<feature type="chain" id="PRO_0000384683" description="Ribosome maturation factor RimP">
    <location>
        <begin position="1"/>
        <end position="161"/>
    </location>
</feature>
<evidence type="ECO:0000255" key="1">
    <source>
        <dbReference type="HAMAP-Rule" id="MF_01077"/>
    </source>
</evidence>
<evidence type="ECO:0000305" key="2"/>
<name>RIMP_HERAR</name>
<accession>A4G7S9</accession>